<sequence length="341" mass="38213">MFVDKTLMITGGTGSFGNAVLSRFLKSNIINDIKEIRIFSRDEKKQEDMRIALNNSKLKFYIGDVRNYQSIDDAMHGVDYVFHAAALKQVPTCEFYPMEAINTNVLGAENVLSAAINNKVTKVIVLSTDKAVYPINAMGLSKALMEKLAIAKARMRSPGETILCVTRYGNVMASRGSVIPLFIHQIKQGKELTITEPSMTRFLMSLVDSVDLVLYAFEHGRQGDIFVQKSPASTIEVLAKALQEIFGSKNAIRFIGTRHGEKHYESLVSSEDMAKADDLGGYYRIPMDGRDLNYAKYFVTGEKKVALLDDYTSHNTKRLNLKEVKELLLTLDYVQKELKNA</sequence>
<evidence type="ECO:0000269" key="1">
    <source>
    </source>
</evidence>
<evidence type="ECO:0000305" key="2"/>
<gene>
    <name type="primary">capD</name>
    <name type="ordered locus">RP333</name>
</gene>
<name>CAPD_RICPR</name>
<accession>Q9ZDJ5</accession>
<feature type="chain" id="PRO_0000314606" description="UDP-glucose 4-epimerase">
    <location>
        <begin position="1"/>
        <end position="341"/>
    </location>
</feature>
<organism>
    <name type="scientific">Rickettsia prowazekii (strain Madrid E)</name>
    <dbReference type="NCBI Taxonomy" id="272947"/>
    <lineage>
        <taxon>Bacteria</taxon>
        <taxon>Pseudomonadati</taxon>
        <taxon>Pseudomonadota</taxon>
        <taxon>Alphaproteobacteria</taxon>
        <taxon>Rickettsiales</taxon>
        <taxon>Rickettsiaceae</taxon>
        <taxon>Rickettsieae</taxon>
        <taxon>Rickettsia</taxon>
        <taxon>typhus group</taxon>
    </lineage>
</organism>
<dbReference type="EC" id="5.1.3.2"/>
<dbReference type="EMBL" id="AJ235271">
    <property type="protein sequence ID" value="CAA14793.1"/>
    <property type="molecule type" value="Genomic_DNA"/>
</dbReference>
<dbReference type="PIR" id="G71689">
    <property type="entry name" value="G71689"/>
</dbReference>
<dbReference type="RefSeq" id="NP_220716.1">
    <property type="nucleotide sequence ID" value="NC_000963.1"/>
</dbReference>
<dbReference type="RefSeq" id="WP_004597459.1">
    <property type="nucleotide sequence ID" value="NC_000963.1"/>
</dbReference>
<dbReference type="SMR" id="Q9ZDJ5"/>
<dbReference type="STRING" id="272947.gene:17555413"/>
<dbReference type="EnsemblBacteria" id="CAA14793">
    <property type="protein sequence ID" value="CAA14793"/>
    <property type="gene ID" value="CAA14793"/>
</dbReference>
<dbReference type="GeneID" id="57569459"/>
<dbReference type="KEGG" id="rpr:RP333"/>
<dbReference type="PATRIC" id="fig|272947.5.peg.343"/>
<dbReference type="eggNOG" id="COG1086">
    <property type="taxonomic scope" value="Bacteria"/>
</dbReference>
<dbReference type="HOGENOM" id="CLU_013560_4_1_5"/>
<dbReference type="OrthoDB" id="9803111at2"/>
<dbReference type="Proteomes" id="UP000002480">
    <property type="component" value="Chromosome"/>
</dbReference>
<dbReference type="GO" id="GO:0003978">
    <property type="term" value="F:UDP-glucose 4-epimerase activity"/>
    <property type="evidence" value="ECO:0007669"/>
    <property type="project" value="UniProtKB-EC"/>
</dbReference>
<dbReference type="GO" id="GO:0009103">
    <property type="term" value="P:lipopolysaccharide biosynthetic process"/>
    <property type="evidence" value="ECO:0007669"/>
    <property type="project" value="UniProtKB-KW"/>
</dbReference>
<dbReference type="CDD" id="cd05237">
    <property type="entry name" value="UDP_invert_4-6DH_SDR_e"/>
    <property type="match status" value="1"/>
</dbReference>
<dbReference type="Gene3D" id="3.40.50.720">
    <property type="entry name" value="NAD(P)-binding Rossmann-like Domain"/>
    <property type="match status" value="1"/>
</dbReference>
<dbReference type="InterPro" id="IPR013692">
    <property type="entry name" value="CapD_C"/>
</dbReference>
<dbReference type="InterPro" id="IPR036291">
    <property type="entry name" value="NAD(P)-bd_dom_sf"/>
</dbReference>
<dbReference type="InterPro" id="IPR003869">
    <property type="entry name" value="Polysac_CapD-like"/>
</dbReference>
<dbReference type="InterPro" id="IPR051203">
    <property type="entry name" value="Polysaccharide_Synthase-Rel"/>
</dbReference>
<dbReference type="PANTHER" id="PTHR43318">
    <property type="entry name" value="UDP-N-ACETYLGLUCOSAMINE 4,6-DEHYDRATASE"/>
    <property type="match status" value="1"/>
</dbReference>
<dbReference type="PANTHER" id="PTHR43318:SF2">
    <property type="entry name" value="UDP-N-ACETYLGLUCOSAMINE 4,6-DEHYDRATASE (INVERTING)"/>
    <property type="match status" value="1"/>
</dbReference>
<dbReference type="Pfam" id="PF08485">
    <property type="entry name" value="Polysacc_syn_2C"/>
    <property type="match status" value="1"/>
</dbReference>
<dbReference type="Pfam" id="PF02719">
    <property type="entry name" value="Polysacc_synt_2"/>
    <property type="match status" value="1"/>
</dbReference>
<dbReference type="SUPFAM" id="SSF51735">
    <property type="entry name" value="NAD(P)-binding Rossmann-fold domains"/>
    <property type="match status" value="1"/>
</dbReference>
<comment type="function">
    <text evidence="1">Epimerizes UDP-galactose to UDP-glucose. May contribute to formation of LPS or the exopolysaccharide slime layer by providing UDP-galactose as a substrate for either molecule.</text>
</comment>
<comment type="catalytic activity">
    <reaction>
        <text>UDP-alpha-D-glucose = UDP-alpha-D-galactose</text>
        <dbReference type="Rhea" id="RHEA:22168"/>
        <dbReference type="ChEBI" id="CHEBI:58885"/>
        <dbReference type="ChEBI" id="CHEBI:66914"/>
        <dbReference type="EC" id="5.1.3.2"/>
    </reaction>
</comment>
<comment type="miscellaneous">
    <text>Addition of NAD/NADP does not result in differences in enzymatic activity.</text>
</comment>
<comment type="miscellaneous">
    <text>Gene transcripts were detected at ten days post-infection in chicken yolk sacs infected with strain Breinl.</text>
</comment>
<comment type="similarity">
    <text evidence="2">Belongs to the polysaccharide synthase family.</text>
</comment>
<protein>
    <recommendedName>
        <fullName>UDP-glucose 4-epimerase</fullName>
        <ecNumber>5.1.3.2</ecNumber>
    </recommendedName>
    <alternativeName>
        <fullName>Galactowaldenase</fullName>
    </alternativeName>
    <alternativeName>
        <fullName>UDP-galactose 4-epimerase</fullName>
    </alternativeName>
</protein>
<proteinExistence type="evidence at protein level"/>
<reference key="1">
    <citation type="journal article" date="1998" name="Nature">
        <title>The genome sequence of Rickettsia prowazekii and the origin of mitochondria.</title>
        <authorList>
            <person name="Andersson S.G.E."/>
            <person name="Zomorodipour A."/>
            <person name="Andersson J.O."/>
            <person name="Sicheritz-Ponten T."/>
            <person name="Alsmark U.C.M."/>
            <person name="Podowski R.M."/>
            <person name="Naeslund A.K."/>
            <person name="Eriksson A.-S."/>
            <person name="Winkler H.H."/>
            <person name="Kurland C.G."/>
        </authorList>
    </citation>
    <scope>NUCLEOTIDE SEQUENCE [LARGE SCALE GENOMIC DNA]</scope>
    <source>
        <strain>Madrid E</strain>
    </source>
</reference>
<reference key="2">
    <citation type="journal article" date="2006" name="Gene">
        <title>Characterization of RP 333, a gene encoding CapD of Rickettsia prowazekii with UDP-glucose 4-epimerase activity.</title>
        <authorList>
            <person name="Santhanagopalan V."/>
            <person name="Coker C."/>
            <person name="Radulovic S."/>
        </authorList>
    </citation>
    <scope>FUNCTION AS AN UDP-GLUCOSE EPIMERASE</scope>
    <source>
        <strain>ATCC VR-142 / Breinl</strain>
    </source>
</reference>
<keyword id="KW-0413">Isomerase</keyword>
<keyword id="KW-0448">Lipopolysaccharide biosynthesis</keyword>
<keyword id="KW-1185">Reference proteome</keyword>